<name>Y5527_VIBPA</name>
<sequence>MEFKVDTHTHTYASGHAYSTLIENAKSAKENGLTMFCSTDHAESMPGAPHYWFFSNQKILPRFLEGVAIVRGVESNILNIEGEIDIPPSVDRNLDWVIASFHEPVFPPANKEAHTEALINVIKSGRVDALGHLGNPNFDFDFEQVLKCAKEHNVAIEINNTTLKGNSRVGSVDRCHEIAQIGKALDVYFTTGSDAHFCHDVGNLELVSELMDNLDIDSNKVITHSAKQFLSFLELRGRLPIAEYDEIRNA</sequence>
<comment type="cofactor">
    <cofactor evidence="1">
        <name>Zn(2+)</name>
        <dbReference type="ChEBI" id="CHEBI:29105"/>
    </cofactor>
    <text evidence="1">Binds 3 Zn(2+) ions per subunit.</text>
</comment>
<comment type="similarity">
    <text evidence="1">Belongs to the PHP family.</text>
</comment>
<comment type="sequence caution" evidence="2">
    <conflict type="erroneous initiation">
        <sequence resource="EMBL-CDS" id="BAC62870"/>
    </conflict>
</comment>
<evidence type="ECO:0000255" key="1">
    <source>
        <dbReference type="HAMAP-Rule" id="MF_01561"/>
    </source>
</evidence>
<evidence type="ECO:0000305" key="2"/>
<keyword id="KW-0378">Hydrolase</keyword>
<keyword id="KW-0479">Metal-binding</keyword>
<keyword id="KW-0862">Zinc</keyword>
<accession>Q87FZ3</accession>
<gene>
    <name type="ordered locus">VPA1527</name>
</gene>
<feature type="chain" id="PRO_0000228709" description="Probable phosphatase VPA1527">
    <location>
        <begin position="1"/>
        <end position="250"/>
    </location>
</feature>
<feature type="binding site" evidence="1">
    <location>
        <position position="8"/>
    </location>
    <ligand>
        <name>Zn(2+)</name>
        <dbReference type="ChEBI" id="CHEBI:29105"/>
        <label>1</label>
    </ligand>
</feature>
<feature type="binding site" evidence="1">
    <location>
        <position position="10"/>
    </location>
    <ligand>
        <name>Zn(2+)</name>
        <dbReference type="ChEBI" id="CHEBI:29105"/>
        <label>1</label>
    </ligand>
</feature>
<feature type="binding site" evidence="1">
    <location>
        <position position="16"/>
    </location>
    <ligand>
        <name>Zn(2+)</name>
        <dbReference type="ChEBI" id="CHEBI:29105"/>
        <label>2</label>
    </ligand>
</feature>
<feature type="binding site" evidence="1">
    <location>
        <position position="41"/>
    </location>
    <ligand>
        <name>Zn(2+)</name>
        <dbReference type="ChEBI" id="CHEBI:29105"/>
        <label>2</label>
    </ligand>
</feature>
<feature type="binding site" evidence="1">
    <location>
        <position position="74"/>
    </location>
    <ligand>
        <name>Zn(2+)</name>
        <dbReference type="ChEBI" id="CHEBI:29105"/>
        <label>1</label>
    </ligand>
</feature>
<feature type="binding site" evidence="1">
    <location>
        <position position="74"/>
    </location>
    <ligand>
        <name>Zn(2+)</name>
        <dbReference type="ChEBI" id="CHEBI:29105"/>
        <label>3</label>
    </ligand>
</feature>
<feature type="binding site" evidence="1">
    <location>
        <position position="102"/>
    </location>
    <ligand>
        <name>Zn(2+)</name>
        <dbReference type="ChEBI" id="CHEBI:29105"/>
        <label>3</label>
    </ligand>
</feature>
<feature type="binding site" evidence="1">
    <location>
        <position position="132"/>
    </location>
    <ligand>
        <name>Zn(2+)</name>
        <dbReference type="ChEBI" id="CHEBI:29105"/>
        <label>3</label>
    </ligand>
</feature>
<feature type="binding site" evidence="1">
    <location>
        <position position="194"/>
    </location>
    <ligand>
        <name>Zn(2+)</name>
        <dbReference type="ChEBI" id="CHEBI:29105"/>
        <label>1</label>
    </ligand>
</feature>
<feature type="binding site" evidence="1">
    <location>
        <position position="196"/>
    </location>
    <ligand>
        <name>Zn(2+)</name>
        <dbReference type="ChEBI" id="CHEBI:29105"/>
        <label>2</label>
    </ligand>
</feature>
<dbReference type="EC" id="3.1.3.-" evidence="1"/>
<dbReference type="EMBL" id="BA000032">
    <property type="protein sequence ID" value="BAC62870.1"/>
    <property type="status" value="ALT_INIT"/>
    <property type="molecule type" value="Genomic_DNA"/>
</dbReference>
<dbReference type="RefSeq" id="NP_801037.1">
    <property type="nucleotide sequence ID" value="NC_004605.1"/>
</dbReference>
<dbReference type="RefSeq" id="WP_021451265.1">
    <property type="nucleotide sequence ID" value="NC_004605.1"/>
</dbReference>
<dbReference type="SMR" id="Q87FZ3"/>
<dbReference type="GeneID" id="1192223"/>
<dbReference type="KEGG" id="vpa:VPA1527"/>
<dbReference type="PATRIC" id="fig|223926.6.peg.4450"/>
<dbReference type="eggNOG" id="COG1387">
    <property type="taxonomic scope" value="Bacteria"/>
</dbReference>
<dbReference type="HOGENOM" id="CLU_061999_0_1_6"/>
<dbReference type="Proteomes" id="UP000002493">
    <property type="component" value="Chromosome 2"/>
</dbReference>
<dbReference type="GO" id="GO:0005829">
    <property type="term" value="C:cytosol"/>
    <property type="evidence" value="ECO:0007669"/>
    <property type="project" value="TreeGrafter"/>
</dbReference>
<dbReference type="GO" id="GO:0016791">
    <property type="term" value="F:phosphatase activity"/>
    <property type="evidence" value="ECO:0007669"/>
    <property type="project" value="UniProtKB-UniRule"/>
</dbReference>
<dbReference type="GO" id="GO:0008270">
    <property type="term" value="F:zinc ion binding"/>
    <property type="evidence" value="ECO:0007669"/>
    <property type="project" value="UniProtKB-UniRule"/>
</dbReference>
<dbReference type="GO" id="GO:0071978">
    <property type="term" value="P:bacterial-type flagellum-dependent swarming motility"/>
    <property type="evidence" value="ECO:0007669"/>
    <property type="project" value="TreeGrafter"/>
</dbReference>
<dbReference type="CDD" id="cd07437">
    <property type="entry name" value="PHP_HisPPase_Ycdx_like"/>
    <property type="match status" value="1"/>
</dbReference>
<dbReference type="Gene3D" id="3.20.20.140">
    <property type="entry name" value="Metal-dependent hydrolases"/>
    <property type="match status" value="1"/>
</dbReference>
<dbReference type="HAMAP" id="MF_01561">
    <property type="entry name" value="YcdX_phosphat"/>
    <property type="match status" value="1"/>
</dbReference>
<dbReference type="InterPro" id="IPR023710">
    <property type="entry name" value="Phosphatase_YcdX_put"/>
</dbReference>
<dbReference type="InterPro" id="IPR050243">
    <property type="entry name" value="PHP_phosphatase"/>
</dbReference>
<dbReference type="InterPro" id="IPR003141">
    <property type="entry name" value="Pol/His_phosphatase_N"/>
</dbReference>
<dbReference type="InterPro" id="IPR016195">
    <property type="entry name" value="Pol/histidinol_Pase-like"/>
</dbReference>
<dbReference type="NCBIfam" id="NF006702">
    <property type="entry name" value="PRK09248.1"/>
    <property type="match status" value="1"/>
</dbReference>
<dbReference type="PANTHER" id="PTHR36928">
    <property type="entry name" value="PHOSPHATASE YCDX-RELATED"/>
    <property type="match status" value="1"/>
</dbReference>
<dbReference type="PANTHER" id="PTHR36928:SF1">
    <property type="entry name" value="PHOSPHATASE YCDX-RELATED"/>
    <property type="match status" value="1"/>
</dbReference>
<dbReference type="SMART" id="SM00481">
    <property type="entry name" value="POLIIIAc"/>
    <property type="match status" value="1"/>
</dbReference>
<dbReference type="SUPFAM" id="SSF89550">
    <property type="entry name" value="PHP domain-like"/>
    <property type="match status" value="1"/>
</dbReference>
<proteinExistence type="inferred from homology"/>
<organism>
    <name type="scientific">Vibrio parahaemolyticus serotype O3:K6 (strain RIMD 2210633)</name>
    <dbReference type="NCBI Taxonomy" id="223926"/>
    <lineage>
        <taxon>Bacteria</taxon>
        <taxon>Pseudomonadati</taxon>
        <taxon>Pseudomonadota</taxon>
        <taxon>Gammaproteobacteria</taxon>
        <taxon>Vibrionales</taxon>
        <taxon>Vibrionaceae</taxon>
        <taxon>Vibrio</taxon>
    </lineage>
</organism>
<protein>
    <recommendedName>
        <fullName evidence="1">Probable phosphatase VPA1527</fullName>
        <ecNumber evidence="1">3.1.3.-</ecNumber>
    </recommendedName>
</protein>
<reference key="1">
    <citation type="journal article" date="2003" name="Lancet">
        <title>Genome sequence of Vibrio parahaemolyticus: a pathogenic mechanism distinct from that of V. cholerae.</title>
        <authorList>
            <person name="Makino K."/>
            <person name="Oshima K."/>
            <person name="Kurokawa K."/>
            <person name="Yokoyama K."/>
            <person name="Uda T."/>
            <person name="Tagomori K."/>
            <person name="Iijima Y."/>
            <person name="Najima M."/>
            <person name="Nakano M."/>
            <person name="Yamashita A."/>
            <person name="Kubota Y."/>
            <person name="Kimura S."/>
            <person name="Yasunaga T."/>
            <person name="Honda T."/>
            <person name="Shinagawa H."/>
            <person name="Hattori M."/>
            <person name="Iida T."/>
        </authorList>
    </citation>
    <scope>NUCLEOTIDE SEQUENCE [LARGE SCALE GENOMIC DNA]</scope>
    <source>
        <strain>RIMD 2210633</strain>
    </source>
</reference>